<sequence length="504" mass="57071">MTTSIVIGVVLVTVGLTFGWTIRWLYARFHLSACEQRAERILQEAQKEAESKKKSILLEAKEYVLRERNQQERDDRDRRAELQRAERRLLQKEEALSTRAGELDSRERSLKQRDQSLCQEEARYRQELERVSGLTQNQARDLIIKNLENEAKHDAQALINKIEEDAALNAERRARDILVTTMQRITADVTGDVTVSTVNLPSEEMKGRIIGREGRNIRALETLTGADVVVDDTPEAVVISCFDPVRKEIARISLERLVLDGRIHPARIEEIVQKVTQEVSQKIYEEGEKVLFDLGIHDMCPEGVRALGRLYFRTSYGQNVLYHSKEVALLASMLASEIGADVAIAKRGALLHDIGKGVETDSDRNHAEIGMEMARKMNEDPRVVNAVGSHHNDIEPCCVESWLVQVADAISAARPGARREMVDHYVKRLENLEAIAEGFSGVEKAYAIQAGRELRVLVNNDKIPDRDVKALGRDIAKKIESDLKYPGRIRVTLIRETRVVEYAR</sequence>
<name>RNY_TREPA</name>
<dbReference type="EC" id="3.1.-.-" evidence="1"/>
<dbReference type="EMBL" id="AE000520">
    <property type="protein sequence ID" value="AAC65967.1"/>
    <property type="molecule type" value="Genomic_DNA"/>
</dbReference>
<dbReference type="PIR" id="F71253">
    <property type="entry name" value="F71253"/>
</dbReference>
<dbReference type="RefSeq" id="WP_010882462.1">
    <property type="nucleotide sequence ID" value="NC_021490.2"/>
</dbReference>
<dbReference type="SMR" id="O83981"/>
<dbReference type="IntAct" id="O83981">
    <property type="interactions" value="6"/>
</dbReference>
<dbReference type="STRING" id="243276.TP_1018"/>
<dbReference type="EnsemblBacteria" id="AAC65967">
    <property type="protein sequence ID" value="AAC65967"/>
    <property type="gene ID" value="TP_1018"/>
</dbReference>
<dbReference type="GeneID" id="93876765"/>
<dbReference type="KEGG" id="tpa:TP_1018"/>
<dbReference type="KEGG" id="tpw:TPANIC_1018"/>
<dbReference type="eggNOG" id="COG1418">
    <property type="taxonomic scope" value="Bacteria"/>
</dbReference>
<dbReference type="HOGENOM" id="CLU_028328_1_0_12"/>
<dbReference type="OrthoDB" id="9803205at2"/>
<dbReference type="Proteomes" id="UP000000811">
    <property type="component" value="Chromosome"/>
</dbReference>
<dbReference type="GO" id="GO:0005886">
    <property type="term" value="C:plasma membrane"/>
    <property type="evidence" value="ECO:0007669"/>
    <property type="project" value="UniProtKB-SubCell"/>
</dbReference>
<dbReference type="GO" id="GO:0003723">
    <property type="term" value="F:RNA binding"/>
    <property type="evidence" value="ECO:0007669"/>
    <property type="project" value="UniProtKB-UniRule"/>
</dbReference>
<dbReference type="GO" id="GO:0004521">
    <property type="term" value="F:RNA endonuclease activity"/>
    <property type="evidence" value="ECO:0007669"/>
    <property type="project" value="UniProtKB-UniRule"/>
</dbReference>
<dbReference type="GO" id="GO:0006402">
    <property type="term" value="P:mRNA catabolic process"/>
    <property type="evidence" value="ECO:0007669"/>
    <property type="project" value="UniProtKB-UniRule"/>
</dbReference>
<dbReference type="CDD" id="cd00077">
    <property type="entry name" value="HDc"/>
    <property type="match status" value="1"/>
</dbReference>
<dbReference type="CDD" id="cd22431">
    <property type="entry name" value="KH-I_RNaseY"/>
    <property type="match status" value="1"/>
</dbReference>
<dbReference type="Gene3D" id="1.10.3210.10">
    <property type="entry name" value="Hypothetical protein af1432"/>
    <property type="match status" value="1"/>
</dbReference>
<dbReference type="Gene3D" id="3.30.1370.10">
    <property type="entry name" value="K Homology domain, type 1"/>
    <property type="match status" value="1"/>
</dbReference>
<dbReference type="HAMAP" id="MF_00335">
    <property type="entry name" value="RNase_Y"/>
    <property type="match status" value="1"/>
</dbReference>
<dbReference type="InterPro" id="IPR003607">
    <property type="entry name" value="HD/PDEase_dom"/>
</dbReference>
<dbReference type="InterPro" id="IPR006674">
    <property type="entry name" value="HD_domain"/>
</dbReference>
<dbReference type="InterPro" id="IPR006675">
    <property type="entry name" value="HDIG_dom"/>
</dbReference>
<dbReference type="InterPro" id="IPR004087">
    <property type="entry name" value="KH_dom"/>
</dbReference>
<dbReference type="InterPro" id="IPR004088">
    <property type="entry name" value="KH_dom_type_1"/>
</dbReference>
<dbReference type="InterPro" id="IPR036612">
    <property type="entry name" value="KH_dom_type_1_sf"/>
</dbReference>
<dbReference type="InterPro" id="IPR017705">
    <property type="entry name" value="Ribonuclease_Y"/>
</dbReference>
<dbReference type="InterPro" id="IPR022711">
    <property type="entry name" value="RNase_Y_N"/>
</dbReference>
<dbReference type="NCBIfam" id="TIGR00277">
    <property type="entry name" value="HDIG"/>
    <property type="match status" value="1"/>
</dbReference>
<dbReference type="NCBIfam" id="NF009345">
    <property type="entry name" value="PRK12705.1-2"/>
    <property type="match status" value="1"/>
</dbReference>
<dbReference type="NCBIfam" id="TIGR03319">
    <property type="entry name" value="RNase_Y"/>
    <property type="match status" value="1"/>
</dbReference>
<dbReference type="PANTHER" id="PTHR12826">
    <property type="entry name" value="RIBONUCLEASE Y"/>
    <property type="match status" value="1"/>
</dbReference>
<dbReference type="PANTHER" id="PTHR12826:SF15">
    <property type="entry name" value="RIBONUCLEASE Y"/>
    <property type="match status" value="1"/>
</dbReference>
<dbReference type="Pfam" id="PF01966">
    <property type="entry name" value="HD"/>
    <property type="match status" value="1"/>
</dbReference>
<dbReference type="Pfam" id="PF00013">
    <property type="entry name" value="KH_1"/>
    <property type="match status" value="1"/>
</dbReference>
<dbReference type="Pfam" id="PF12072">
    <property type="entry name" value="RNase_Y_N"/>
    <property type="match status" value="1"/>
</dbReference>
<dbReference type="SMART" id="SM00471">
    <property type="entry name" value="HDc"/>
    <property type="match status" value="1"/>
</dbReference>
<dbReference type="SMART" id="SM00322">
    <property type="entry name" value="KH"/>
    <property type="match status" value="1"/>
</dbReference>
<dbReference type="SUPFAM" id="SSF54791">
    <property type="entry name" value="Eukaryotic type KH-domain (KH-domain type I)"/>
    <property type="match status" value="1"/>
</dbReference>
<dbReference type="SUPFAM" id="SSF109604">
    <property type="entry name" value="HD-domain/PDEase-like"/>
    <property type="match status" value="1"/>
</dbReference>
<dbReference type="PROSITE" id="PS51831">
    <property type="entry name" value="HD"/>
    <property type="match status" value="1"/>
</dbReference>
<dbReference type="PROSITE" id="PS50084">
    <property type="entry name" value="KH_TYPE_1"/>
    <property type="match status" value="1"/>
</dbReference>
<comment type="function">
    <text evidence="1">Endoribonuclease that initiates mRNA decay.</text>
</comment>
<comment type="subcellular location">
    <subcellularLocation>
        <location evidence="1">Cell membrane</location>
        <topology evidence="1">Single-pass membrane protein</topology>
    </subcellularLocation>
</comment>
<comment type="similarity">
    <text evidence="1">Belongs to the RNase Y family.</text>
</comment>
<evidence type="ECO:0000255" key="1">
    <source>
        <dbReference type="HAMAP-Rule" id="MF_00335"/>
    </source>
</evidence>
<evidence type="ECO:0000255" key="2">
    <source>
        <dbReference type="PROSITE-ProRule" id="PRU01175"/>
    </source>
</evidence>
<protein>
    <recommendedName>
        <fullName evidence="1">Ribonuclease Y</fullName>
        <shortName evidence="1">RNase Y</shortName>
        <ecNumber evidence="1">3.1.-.-</ecNumber>
    </recommendedName>
</protein>
<feature type="chain" id="PRO_0000163805" description="Ribonuclease Y">
    <location>
        <begin position="1"/>
        <end position="504"/>
    </location>
</feature>
<feature type="transmembrane region" description="Helical" evidence="1">
    <location>
        <begin position="2"/>
        <end position="22"/>
    </location>
</feature>
<feature type="domain" description="KH" evidence="1">
    <location>
        <begin position="194"/>
        <end position="279"/>
    </location>
</feature>
<feature type="domain" description="HD" evidence="2">
    <location>
        <begin position="320"/>
        <end position="413"/>
    </location>
</feature>
<gene>
    <name evidence="1" type="primary">rny</name>
    <name type="ordered locus">TP_1018</name>
</gene>
<reference key="1">
    <citation type="journal article" date="1998" name="Science">
        <title>Complete genome sequence of Treponema pallidum, the syphilis spirochete.</title>
        <authorList>
            <person name="Fraser C.M."/>
            <person name="Norris S.J."/>
            <person name="Weinstock G.M."/>
            <person name="White O."/>
            <person name="Sutton G.G."/>
            <person name="Dodson R.J."/>
            <person name="Gwinn M.L."/>
            <person name="Hickey E.K."/>
            <person name="Clayton R.A."/>
            <person name="Ketchum K.A."/>
            <person name="Sodergren E."/>
            <person name="Hardham J.M."/>
            <person name="McLeod M.P."/>
            <person name="Salzberg S.L."/>
            <person name="Peterson J.D."/>
            <person name="Khalak H.G."/>
            <person name="Richardson D.L."/>
            <person name="Howell J.K."/>
            <person name="Chidambaram M."/>
            <person name="Utterback T.R."/>
            <person name="McDonald L.A."/>
            <person name="Artiach P."/>
            <person name="Bowman C."/>
            <person name="Cotton M.D."/>
            <person name="Fujii C."/>
            <person name="Garland S.A."/>
            <person name="Hatch B."/>
            <person name="Horst K."/>
            <person name="Roberts K.M."/>
            <person name="Sandusky M."/>
            <person name="Weidman J.F."/>
            <person name="Smith H.O."/>
            <person name="Venter J.C."/>
        </authorList>
    </citation>
    <scope>NUCLEOTIDE SEQUENCE [LARGE SCALE GENOMIC DNA]</scope>
    <source>
        <strain>Nichols</strain>
    </source>
</reference>
<accession>O83981</accession>
<keyword id="KW-1003">Cell membrane</keyword>
<keyword id="KW-0255">Endonuclease</keyword>
<keyword id="KW-0378">Hydrolase</keyword>
<keyword id="KW-0472">Membrane</keyword>
<keyword id="KW-0540">Nuclease</keyword>
<keyword id="KW-1185">Reference proteome</keyword>
<keyword id="KW-0694">RNA-binding</keyword>
<keyword id="KW-0812">Transmembrane</keyword>
<keyword id="KW-1133">Transmembrane helix</keyword>
<proteinExistence type="inferred from homology"/>
<organism>
    <name type="scientific">Treponema pallidum (strain Nichols)</name>
    <dbReference type="NCBI Taxonomy" id="243276"/>
    <lineage>
        <taxon>Bacteria</taxon>
        <taxon>Pseudomonadati</taxon>
        <taxon>Spirochaetota</taxon>
        <taxon>Spirochaetia</taxon>
        <taxon>Spirochaetales</taxon>
        <taxon>Treponemataceae</taxon>
        <taxon>Treponema</taxon>
    </lineage>
</organism>